<gene>
    <name evidence="1" type="primary">rpsR</name>
    <name type="ordered locus">Mmar10_1211</name>
</gene>
<evidence type="ECO:0000255" key="1">
    <source>
        <dbReference type="HAMAP-Rule" id="MF_00270"/>
    </source>
</evidence>
<evidence type="ECO:0000305" key="2"/>
<protein>
    <recommendedName>
        <fullName evidence="1">Small ribosomal subunit protein bS18</fullName>
    </recommendedName>
    <alternativeName>
        <fullName evidence="2">30S ribosomal protein S18</fullName>
    </alternativeName>
</protein>
<comment type="function">
    <text evidence="1">Binds as a heterodimer with protein bS6 to the central domain of the 16S rRNA, where it helps stabilize the platform of the 30S subunit.</text>
</comment>
<comment type="subunit">
    <text evidence="1">Part of the 30S ribosomal subunit. Forms a tight heterodimer with protein bS6.</text>
</comment>
<comment type="similarity">
    <text evidence="1">Belongs to the bacterial ribosomal protein bS18 family.</text>
</comment>
<feature type="chain" id="PRO_0000345492" description="Small ribosomal subunit protein bS18">
    <location>
        <begin position="1"/>
        <end position="84"/>
    </location>
</feature>
<reference key="1">
    <citation type="submission" date="2006-08" db="EMBL/GenBank/DDBJ databases">
        <title>Complete sequence of Maricaulis maris MCS10.</title>
        <authorList>
            <consortium name="US DOE Joint Genome Institute"/>
            <person name="Copeland A."/>
            <person name="Lucas S."/>
            <person name="Lapidus A."/>
            <person name="Barry K."/>
            <person name="Detter J.C."/>
            <person name="Glavina del Rio T."/>
            <person name="Hammon N."/>
            <person name="Israni S."/>
            <person name="Dalin E."/>
            <person name="Tice H."/>
            <person name="Pitluck S."/>
            <person name="Saunders E."/>
            <person name="Brettin T."/>
            <person name="Bruce D."/>
            <person name="Han C."/>
            <person name="Tapia R."/>
            <person name="Gilna P."/>
            <person name="Schmutz J."/>
            <person name="Larimer F."/>
            <person name="Land M."/>
            <person name="Hauser L."/>
            <person name="Kyrpides N."/>
            <person name="Mikhailova N."/>
            <person name="Viollier P."/>
            <person name="Stephens C."/>
            <person name="Richardson P."/>
        </authorList>
    </citation>
    <scope>NUCLEOTIDE SEQUENCE [LARGE SCALE GENOMIC DNA]</scope>
    <source>
        <strain>MCS10</strain>
    </source>
</reference>
<accession>Q0AQD3</accession>
<keyword id="KW-1185">Reference proteome</keyword>
<keyword id="KW-0687">Ribonucleoprotein</keyword>
<keyword id="KW-0689">Ribosomal protein</keyword>
<keyword id="KW-0694">RNA-binding</keyword>
<keyword id="KW-0699">rRNA-binding</keyword>
<sequence length="84" mass="9553">MSSGNISNLPARRPFMRRRKVCPFSGENAPAIDFKDPKLLLRYMSERGKIVPSRITAVSAKKQRELARAIKRARQLALLPYVVD</sequence>
<name>RS18_MARMM</name>
<organism>
    <name type="scientific">Maricaulis maris (strain MCS10)</name>
    <name type="common">Caulobacter maris</name>
    <dbReference type="NCBI Taxonomy" id="394221"/>
    <lineage>
        <taxon>Bacteria</taxon>
        <taxon>Pseudomonadati</taxon>
        <taxon>Pseudomonadota</taxon>
        <taxon>Alphaproteobacteria</taxon>
        <taxon>Maricaulales</taxon>
        <taxon>Maricaulaceae</taxon>
        <taxon>Maricaulis</taxon>
    </lineage>
</organism>
<proteinExistence type="inferred from homology"/>
<dbReference type="EMBL" id="CP000449">
    <property type="protein sequence ID" value="ABI65504.1"/>
    <property type="molecule type" value="Genomic_DNA"/>
</dbReference>
<dbReference type="RefSeq" id="WP_011643151.1">
    <property type="nucleotide sequence ID" value="NC_008347.1"/>
</dbReference>
<dbReference type="SMR" id="Q0AQD3"/>
<dbReference type="STRING" id="394221.Mmar10_1211"/>
<dbReference type="KEGG" id="mmr:Mmar10_1211"/>
<dbReference type="eggNOG" id="COG0238">
    <property type="taxonomic scope" value="Bacteria"/>
</dbReference>
<dbReference type="HOGENOM" id="CLU_148710_2_2_5"/>
<dbReference type="OrthoDB" id="9812008at2"/>
<dbReference type="Proteomes" id="UP000001964">
    <property type="component" value="Chromosome"/>
</dbReference>
<dbReference type="GO" id="GO:0022627">
    <property type="term" value="C:cytosolic small ribosomal subunit"/>
    <property type="evidence" value="ECO:0007669"/>
    <property type="project" value="TreeGrafter"/>
</dbReference>
<dbReference type="GO" id="GO:0070181">
    <property type="term" value="F:small ribosomal subunit rRNA binding"/>
    <property type="evidence" value="ECO:0007669"/>
    <property type="project" value="TreeGrafter"/>
</dbReference>
<dbReference type="GO" id="GO:0003735">
    <property type="term" value="F:structural constituent of ribosome"/>
    <property type="evidence" value="ECO:0007669"/>
    <property type="project" value="InterPro"/>
</dbReference>
<dbReference type="GO" id="GO:0006412">
    <property type="term" value="P:translation"/>
    <property type="evidence" value="ECO:0007669"/>
    <property type="project" value="UniProtKB-UniRule"/>
</dbReference>
<dbReference type="Gene3D" id="4.10.640.10">
    <property type="entry name" value="Ribosomal protein S18"/>
    <property type="match status" value="1"/>
</dbReference>
<dbReference type="HAMAP" id="MF_00270">
    <property type="entry name" value="Ribosomal_bS18"/>
    <property type="match status" value="1"/>
</dbReference>
<dbReference type="InterPro" id="IPR001648">
    <property type="entry name" value="Ribosomal_bS18"/>
</dbReference>
<dbReference type="InterPro" id="IPR018275">
    <property type="entry name" value="Ribosomal_bS18_CS"/>
</dbReference>
<dbReference type="InterPro" id="IPR036870">
    <property type="entry name" value="Ribosomal_bS18_sf"/>
</dbReference>
<dbReference type="NCBIfam" id="TIGR00165">
    <property type="entry name" value="S18"/>
    <property type="match status" value="1"/>
</dbReference>
<dbReference type="PANTHER" id="PTHR13479">
    <property type="entry name" value="30S RIBOSOMAL PROTEIN S18"/>
    <property type="match status" value="1"/>
</dbReference>
<dbReference type="PANTHER" id="PTHR13479:SF40">
    <property type="entry name" value="SMALL RIBOSOMAL SUBUNIT PROTEIN BS18M"/>
    <property type="match status" value="1"/>
</dbReference>
<dbReference type="Pfam" id="PF01084">
    <property type="entry name" value="Ribosomal_S18"/>
    <property type="match status" value="1"/>
</dbReference>
<dbReference type="PRINTS" id="PR00974">
    <property type="entry name" value="RIBOSOMALS18"/>
</dbReference>
<dbReference type="SUPFAM" id="SSF46911">
    <property type="entry name" value="Ribosomal protein S18"/>
    <property type="match status" value="1"/>
</dbReference>
<dbReference type="PROSITE" id="PS00057">
    <property type="entry name" value="RIBOSOMAL_S18"/>
    <property type="match status" value="1"/>
</dbReference>